<keyword id="KW-0025">Alternative splicing</keyword>
<keyword id="KW-1003">Cell membrane</keyword>
<keyword id="KW-0903">Direct protein sequencing</keyword>
<keyword id="KW-0967">Endosome</keyword>
<keyword id="KW-0325">Glycoprotein</keyword>
<keyword id="KW-0449">Lipoprotein</keyword>
<keyword id="KW-0458">Lysosome</keyword>
<keyword id="KW-0472">Membrane</keyword>
<keyword id="KW-0564">Palmitate</keyword>
<keyword id="KW-0653">Protein transport</keyword>
<keyword id="KW-1267">Proteomics identification</keyword>
<keyword id="KW-1185">Reference proteome</keyword>
<keyword id="KW-0964">Secreted</keyword>
<keyword id="KW-0812">Transmembrane</keyword>
<keyword id="KW-1133">Transmembrane helix</keyword>
<keyword id="KW-0813">Transport</keyword>
<reference key="1">
    <citation type="journal article" date="1988" name="Cancer Res.">
        <title>Molecular cloning and characterization of an antigen associated with early stages of melanoma tumor progression.</title>
        <authorList>
            <person name="Hotta H."/>
            <person name="Ross A.H."/>
            <person name="Huebner K."/>
            <person name="Isobe M."/>
            <person name="Wendeborn S."/>
            <person name="Chao M.V."/>
            <person name="Ricciardi R.P."/>
            <person name="Tsujimoto Y."/>
            <person name="Croce C.M."/>
            <person name="Koprowski H."/>
        </authorList>
    </citation>
    <scope>NUCLEOTIDE SEQUENCE [MRNA] (ISOFORM 1)</scope>
</reference>
<reference key="2">
    <citation type="journal article" date="1990" name="DNA Cell Biol.">
        <title>Characterization of three abundant mRNAs from human ovarian granulosa cells.</title>
        <authorList>
            <person name="Rapp G."/>
            <person name="Freudenstein J."/>
            <person name="Klaudiny J."/>
            <person name="Mucha J."/>
            <person name="Wempe F."/>
            <person name="Zimmer M."/>
            <person name="Scheit K.H."/>
        </authorList>
    </citation>
    <scope>NUCLEOTIDE SEQUENCE [MRNA] (ISOFORM 1)</scope>
    <source>
        <tissue>Ovary</tissue>
    </source>
</reference>
<reference key="3">
    <citation type="journal article" date="1991" name="J. Biol. Chem.">
        <title>CD63 antigen. A novel lysosomal membrane glycoprotein, cloned by a screening procedure for intracellular antigens in eukaryotic cells.</title>
        <authorList>
            <person name="Metzelaar M.J."/>
            <person name="Wigngaard P.L."/>
            <person name="Peters P.J."/>
            <person name="Sixma J.J."/>
            <person name="Nieuwenhuis H.K."/>
            <person name="Clevers H.C."/>
        </authorList>
    </citation>
    <scope>NUCLEOTIDE SEQUENCE [MRNA] (ISOFORM 1)</scope>
    <scope>SUBCELLULAR LOCATION</scope>
</reference>
<reference key="4">
    <citation type="journal article" date="1992" name="Arch. Ophthalmol.">
        <title>An ocular melanoma-associated antigen. Molecular characterization.</title>
        <authorList>
            <person name="Wang M.X."/>
            <person name="Earley J.J. Jr."/>
            <person name="Shields J.A."/>
            <person name="Donoso L.A."/>
        </authorList>
    </citation>
    <scope>NUCLEOTIDE SEQUENCE [MRNA] (ISOFORM 1)</scope>
</reference>
<reference key="5">
    <citation type="journal article" date="1992" name="Biochem. Biophys. Res. Commun.">
        <title>Genomic structure of the ME491/CD63 antigen gene and functional analysis of the 5'-flanking regulatory sequences.</title>
        <authorList>
            <person name="Hotta H."/>
            <person name="Miyamoto H."/>
            <person name="Hara I."/>
            <person name="Takahashi N."/>
            <person name="Homma M."/>
        </authorList>
    </citation>
    <scope>NUCLEOTIDE SEQUENCE [GENOMIC DNA]</scope>
</reference>
<reference key="6">
    <citation type="submission" date="2002-05" db="EMBL/GenBank/DDBJ databases">
        <title>Melanocyte variant of lysosome-associated membrane protein-3 (LAMP3; also CD63 and melanoma associated antigen ME419) mRNA.</title>
        <authorList>
            <person name="Ancans J."/>
            <person name="Suzuki I."/>
            <person name="Thody A.J."/>
        </authorList>
    </citation>
    <scope>NUCLEOTIDE SEQUENCE [MRNA] (ISOFORM 2)</scope>
    <source>
        <tissue>Skin</tissue>
    </source>
</reference>
<reference key="7">
    <citation type="journal article" date="2004" name="Nat. Genet.">
        <title>Complete sequencing and characterization of 21,243 full-length human cDNAs.</title>
        <authorList>
            <person name="Ota T."/>
            <person name="Suzuki Y."/>
            <person name="Nishikawa T."/>
            <person name="Otsuki T."/>
            <person name="Sugiyama T."/>
            <person name="Irie R."/>
            <person name="Wakamatsu A."/>
            <person name="Hayashi K."/>
            <person name="Sato H."/>
            <person name="Nagai K."/>
            <person name="Kimura K."/>
            <person name="Makita H."/>
            <person name="Sekine M."/>
            <person name="Obayashi M."/>
            <person name="Nishi T."/>
            <person name="Shibahara T."/>
            <person name="Tanaka T."/>
            <person name="Ishii S."/>
            <person name="Yamamoto J."/>
            <person name="Saito K."/>
            <person name="Kawai Y."/>
            <person name="Isono Y."/>
            <person name="Nakamura Y."/>
            <person name="Nagahari K."/>
            <person name="Murakami K."/>
            <person name="Yasuda T."/>
            <person name="Iwayanagi T."/>
            <person name="Wagatsuma M."/>
            <person name="Shiratori A."/>
            <person name="Sudo H."/>
            <person name="Hosoiri T."/>
            <person name="Kaku Y."/>
            <person name="Kodaira H."/>
            <person name="Kondo H."/>
            <person name="Sugawara M."/>
            <person name="Takahashi M."/>
            <person name="Kanda K."/>
            <person name="Yokoi T."/>
            <person name="Furuya T."/>
            <person name="Kikkawa E."/>
            <person name="Omura Y."/>
            <person name="Abe K."/>
            <person name="Kamihara K."/>
            <person name="Katsuta N."/>
            <person name="Sato K."/>
            <person name="Tanikawa M."/>
            <person name="Yamazaki M."/>
            <person name="Ninomiya K."/>
            <person name="Ishibashi T."/>
            <person name="Yamashita H."/>
            <person name="Murakawa K."/>
            <person name="Fujimori K."/>
            <person name="Tanai H."/>
            <person name="Kimata M."/>
            <person name="Watanabe M."/>
            <person name="Hiraoka S."/>
            <person name="Chiba Y."/>
            <person name="Ishida S."/>
            <person name="Ono Y."/>
            <person name="Takiguchi S."/>
            <person name="Watanabe S."/>
            <person name="Yosida M."/>
            <person name="Hotuta T."/>
            <person name="Kusano J."/>
            <person name="Kanehori K."/>
            <person name="Takahashi-Fujii A."/>
            <person name="Hara H."/>
            <person name="Tanase T.-O."/>
            <person name="Nomura Y."/>
            <person name="Togiya S."/>
            <person name="Komai F."/>
            <person name="Hara R."/>
            <person name="Takeuchi K."/>
            <person name="Arita M."/>
            <person name="Imose N."/>
            <person name="Musashino K."/>
            <person name="Yuuki H."/>
            <person name="Oshima A."/>
            <person name="Sasaki N."/>
            <person name="Aotsuka S."/>
            <person name="Yoshikawa Y."/>
            <person name="Matsunawa H."/>
            <person name="Ichihara T."/>
            <person name="Shiohata N."/>
            <person name="Sano S."/>
            <person name="Moriya S."/>
            <person name="Momiyama H."/>
            <person name="Satoh N."/>
            <person name="Takami S."/>
            <person name="Terashima Y."/>
            <person name="Suzuki O."/>
            <person name="Nakagawa S."/>
            <person name="Senoh A."/>
            <person name="Mizoguchi H."/>
            <person name="Goto Y."/>
            <person name="Shimizu F."/>
            <person name="Wakebe H."/>
            <person name="Hishigaki H."/>
            <person name="Watanabe T."/>
            <person name="Sugiyama A."/>
            <person name="Takemoto M."/>
            <person name="Kawakami B."/>
            <person name="Yamazaki M."/>
            <person name="Watanabe K."/>
            <person name="Kumagai A."/>
            <person name="Itakura S."/>
            <person name="Fukuzumi Y."/>
            <person name="Fujimori Y."/>
            <person name="Komiyama M."/>
            <person name="Tashiro H."/>
            <person name="Tanigami A."/>
            <person name="Fujiwara T."/>
            <person name="Ono T."/>
            <person name="Yamada K."/>
            <person name="Fujii Y."/>
            <person name="Ozaki K."/>
            <person name="Hirao M."/>
            <person name="Ohmori Y."/>
            <person name="Kawabata A."/>
            <person name="Hikiji T."/>
            <person name="Kobatake N."/>
            <person name="Inagaki H."/>
            <person name="Ikema Y."/>
            <person name="Okamoto S."/>
            <person name="Okitani R."/>
            <person name="Kawakami T."/>
            <person name="Noguchi S."/>
            <person name="Itoh T."/>
            <person name="Shigeta K."/>
            <person name="Senba T."/>
            <person name="Matsumura K."/>
            <person name="Nakajima Y."/>
            <person name="Mizuno T."/>
            <person name="Morinaga M."/>
            <person name="Sasaki M."/>
            <person name="Togashi T."/>
            <person name="Oyama M."/>
            <person name="Hata H."/>
            <person name="Watanabe M."/>
            <person name="Komatsu T."/>
            <person name="Mizushima-Sugano J."/>
            <person name="Satoh T."/>
            <person name="Shirai Y."/>
            <person name="Takahashi Y."/>
            <person name="Nakagawa K."/>
            <person name="Okumura K."/>
            <person name="Nagase T."/>
            <person name="Nomura N."/>
            <person name="Kikuchi H."/>
            <person name="Masuho Y."/>
            <person name="Yamashita R."/>
            <person name="Nakai K."/>
            <person name="Yada T."/>
            <person name="Nakamura Y."/>
            <person name="Ohara O."/>
            <person name="Isogai T."/>
            <person name="Sugano S."/>
        </authorList>
    </citation>
    <scope>NUCLEOTIDE SEQUENCE [LARGE SCALE MRNA] (ISOFORM 1)</scope>
    <source>
        <tissue>Skeletal muscle</tissue>
    </source>
</reference>
<reference key="8">
    <citation type="submission" date="2004-06" db="EMBL/GenBank/DDBJ databases">
        <title>Cloning of human full open reading frames in Gateway(TM) system entry vector (pDONR201).</title>
        <authorList>
            <person name="Halleck A."/>
            <person name="Ebert L."/>
            <person name="Mkoundinya M."/>
            <person name="Schick M."/>
            <person name="Eisenstein S."/>
            <person name="Neubert P."/>
            <person name="Kstrang K."/>
            <person name="Schatten R."/>
            <person name="Shen B."/>
            <person name="Henze S."/>
            <person name="Mar W."/>
            <person name="Korn B."/>
            <person name="Zuo D."/>
            <person name="Hu Y."/>
            <person name="LaBaer J."/>
        </authorList>
    </citation>
    <scope>NUCLEOTIDE SEQUENCE [LARGE SCALE MRNA] (ISOFORM 1)</scope>
</reference>
<reference key="9">
    <citation type="submission" date="2004-10" db="EMBL/GenBank/DDBJ databases">
        <title>Cloning of human full-length CDSs in BD Creator(TM) system donor vector.</title>
        <authorList>
            <person name="Kalnine N."/>
            <person name="Chen X."/>
            <person name="Rolfs A."/>
            <person name="Halleck A."/>
            <person name="Hines L."/>
            <person name="Eisenstein S."/>
            <person name="Koundinya M."/>
            <person name="Raphael J."/>
            <person name="Moreira D."/>
            <person name="Kelley T."/>
            <person name="LaBaer J."/>
            <person name="Lin Y."/>
            <person name="Phelan M."/>
            <person name="Farmer A."/>
        </authorList>
    </citation>
    <scope>NUCLEOTIDE SEQUENCE [LARGE SCALE MRNA] (ISOFORM 1)</scope>
</reference>
<reference key="10">
    <citation type="journal article" date="2006" name="Nature">
        <title>The finished DNA sequence of human chromosome 12.</title>
        <authorList>
            <person name="Scherer S.E."/>
            <person name="Muzny D.M."/>
            <person name="Buhay C.J."/>
            <person name="Chen R."/>
            <person name="Cree A."/>
            <person name="Ding Y."/>
            <person name="Dugan-Rocha S."/>
            <person name="Gill R."/>
            <person name="Gunaratne P."/>
            <person name="Harris R.A."/>
            <person name="Hawes A.C."/>
            <person name="Hernandez J."/>
            <person name="Hodgson A.V."/>
            <person name="Hume J."/>
            <person name="Jackson A."/>
            <person name="Khan Z.M."/>
            <person name="Kovar-Smith C."/>
            <person name="Lewis L.R."/>
            <person name="Lozado R.J."/>
            <person name="Metzker M.L."/>
            <person name="Milosavljevic A."/>
            <person name="Miner G.R."/>
            <person name="Montgomery K.T."/>
            <person name="Morgan M.B."/>
            <person name="Nazareth L.V."/>
            <person name="Scott G."/>
            <person name="Sodergren E."/>
            <person name="Song X.-Z."/>
            <person name="Steffen D."/>
            <person name="Lovering R.C."/>
            <person name="Wheeler D.A."/>
            <person name="Worley K.C."/>
            <person name="Yuan Y."/>
            <person name="Zhang Z."/>
            <person name="Adams C.Q."/>
            <person name="Ansari-Lari M.A."/>
            <person name="Ayele M."/>
            <person name="Brown M.J."/>
            <person name="Chen G."/>
            <person name="Chen Z."/>
            <person name="Clerc-Blankenburg K.P."/>
            <person name="Davis C."/>
            <person name="Delgado O."/>
            <person name="Dinh H.H."/>
            <person name="Draper H."/>
            <person name="Gonzalez-Garay M.L."/>
            <person name="Havlak P."/>
            <person name="Jackson L.R."/>
            <person name="Jacob L.S."/>
            <person name="Kelly S.H."/>
            <person name="Li L."/>
            <person name="Li Z."/>
            <person name="Liu J."/>
            <person name="Liu W."/>
            <person name="Lu J."/>
            <person name="Maheshwari M."/>
            <person name="Nguyen B.-V."/>
            <person name="Okwuonu G.O."/>
            <person name="Pasternak S."/>
            <person name="Perez L.M."/>
            <person name="Plopper F.J.H."/>
            <person name="Santibanez J."/>
            <person name="Shen H."/>
            <person name="Tabor P.E."/>
            <person name="Verduzco D."/>
            <person name="Waldron L."/>
            <person name="Wang Q."/>
            <person name="Williams G.A."/>
            <person name="Zhang J."/>
            <person name="Zhou J."/>
            <person name="Allen C.C."/>
            <person name="Amin A.G."/>
            <person name="Anyalebechi V."/>
            <person name="Bailey M."/>
            <person name="Barbaria J.A."/>
            <person name="Bimage K.E."/>
            <person name="Bryant N.P."/>
            <person name="Burch P.E."/>
            <person name="Burkett C.E."/>
            <person name="Burrell K.L."/>
            <person name="Calderon E."/>
            <person name="Cardenas V."/>
            <person name="Carter K."/>
            <person name="Casias K."/>
            <person name="Cavazos I."/>
            <person name="Cavazos S.R."/>
            <person name="Ceasar H."/>
            <person name="Chacko J."/>
            <person name="Chan S.N."/>
            <person name="Chavez D."/>
            <person name="Christopoulos C."/>
            <person name="Chu J."/>
            <person name="Cockrell R."/>
            <person name="Cox C.D."/>
            <person name="Dang M."/>
            <person name="Dathorne S.R."/>
            <person name="David R."/>
            <person name="Davis C.M."/>
            <person name="Davy-Carroll L."/>
            <person name="Deshazo D.R."/>
            <person name="Donlin J.E."/>
            <person name="D'Souza L."/>
            <person name="Eaves K.A."/>
            <person name="Egan A."/>
            <person name="Emery-Cohen A.J."/>
            <person name="Escotto M."/>
            <person name="Flagg N."/>
            <person name="Forbes L.D."/>
            <person name="Gabisi A.M."/>
            <person name="Garza M."/>
            <person name="Hamilton C."/>
            <person name="Henderson N."/>
            <person name="Hernandez O."/>
            <person name="Hines S."/>
            <person name="Hogues M.E."/>
            <person name="Huang M."/>
            <person name="Idlebird D.G."/>
            <person name="Johnson R."/>
            <person name="Jolivet A."/>
            <person name="Jones S."/>
            <person name="Kagan R."/>
            <person name="King L.M."/>
            <person name="Leal B."/>
            <person name="Lebow H."/>
            <person name="Lee S."/>
            <person name="LeVan J.M."/>
            <person name="Lewis L.C."/>
            <person name="London P."/>
            <person name="Lorensuhewa L.M."/>
            <person name="Loulseged H."/>
            <person name="Lovett D.A."/>
            <person name="Lucier A."/>
            <person name="Lucier R.L."/>
            <person name="Ma J."/>
            <person name="Madu R.C."/>
            <person name="Mapua P."/>
            <person name="Martindale A.D."/>
            <person name="Martinez E."/>
            <person name="Massey E."/>
            <person name="Mawhiney S."/>
            <person name="Meador M.G."/>
            <person name="Mendez S."/>
            <person name="Mercado C."/>
            <person name="Mercado I.C."/>
            <person name="Merritt C.E."/>
            <person name="Miner Z.L."/>
            <person name="Minja E."/>
            <person name="Mitchell T."/>
            <person name="Mohabbat F."/>
            <person name="Mohabbat K."/>
            <person name="Montgomery B."/>
            <person name="Moore N."/>
            <person name="Morris S."/>
            <person name="Munidasa M."/>
            <person name="Ngo R.N."/>
            <person name="Nguyen N.B."/>
            <person name="Nickerson E."/>
            <person name="Nwaokelemeh O.O."/>
            <person name="Nwokenkwo S."/>
            <person name="Obregon M."/>
            <person name="Oguh M."/>
            <person name="Oragunye N."/>
            <person name="Oviedo R.J."/>
            <person name="Parish B.J."/>
            <person name="Parker D.N."/>
            <person name="Parrish J."/>
            <person name="Parks K.L."/>
            <person name="Paul H.A."/>
            <person name="Payton B.A."/>
            <person name="Perez A."/>
            <person name="Perrin W."/>
            <person name="Pickens A."/>
            <person name="Primus E.L."/>
            <person name="Pu L.-L."/>
            <person name="Puazo M."/>
            <person name="Quiles M.M."/>
            <person name="Quiroz J.B."/>
            <person name="Rabata D."/>
            <person name="Reeves K."/>
            <person name="Ruiz S.J."/>
            <person name="Shao H."/>
            <person name="Sisson I."/>
            <person name="Sonaike T."/>
            <person name="Sorelle R.P."/>
            <person name="Sutton A.E."/>
            <person name="Svatek A.F."/>
            <person name="Svetz L.A."/>
            <person name="Tamerisa K.S."/>
            <person name="Taylor T.R."/>
            <person name="Teague B."/>
            <person name="Thomas N."/>
            <person name="Thorn R.D."/>
            <person name="Trejos Z.Y."/>
            <person name="Trevino B.K."/>
            <person name="Ukegbu O.N."/>
            <person name="Urban J.B."/>
            <person name="Vasquez L.I."/>
            <person name="Vera V.A."/>
            <person name="Villasana D.M."/>
            <person name="Wang L."/>
            <person name="Ward-Moore S."/>
            <person name="Warren J.T."/>
            <person name="Wei X."/>
            <person name="White F."/>
            <person name="Williamson A.L."/>
            <person name="Wleczyk R."/>
            <person name="Wooden H.S."/>
            <person name="Wooden S.H."/>
            <person name="Yen J."/>
            <person name="Yoon L."/>
            <person name="Yoon V."/>
            <person name="Zorrilla S.E."/>
            <person name="Nelson D."/>
            <person name="Kucherlapati R."/>
            <person name="Weinstock G."/>
            <person name="Gibbs R.A."/>
        </authorList>
    </citation>
    <scope>NUCLEOTIDE SEQUENCE [LARGE SCALE GENOMIC DNA]</scope>
</reference>
<reference key="11">
    <citation type="submission" date="2005-07" db="EMBL/GenBank/DDBJ databases">
        <authorList>
            <person name="Mural R.J."/>
            <person name="Istrail S."/>
            <person name="Sutton G.G."/>
            <person name="Florea L."/>
            <person name="Halpern A.L."/>
            <person name="Mobarry C.M."/>
            <person name="Lippert R."/>
            <person name="Walenz B."/>
            <person name="Shatkay H."/>
            <person name="Dew I."/>
            <person name="Miller J.R."/>
            <person name="Flanigan M.J."/>
            <person name="Edwards N.J."/>
            <person name="Bolanos R."/>
            <person name="Fasulo D."/>
            <person name="Halldorsson B.V."/>
            <person name="Hannenhalli S."/>
            <person name="Turner R."/>
            <person name="Yooseph S."/>
            <person name="Lu F."/>
            <person name="Nusskern D.R."/>
            <person name="Shue B.C."/>
            <person name="Zheng X.H."/>
            <person name="Zhong F."/>
            <person name="Delcher A.L."/>
            <person name="Huson D.H."/>
            <person name="Kravitz S.A."/>
            <person name="Mouchard L."/>
            <person name="Reinert K."/>
            <person name="Remington K.A."/>
            <person name="Clark A.G."/>
            <person name="Waterman M.S."/>
            <person name="Eichler E.E."/>
            <person name="Adams M.D."/>
            <person name="Hunkapiller M.W."/>
            <person name="Myers E.W."/>
            <person name="Venter J.C."/>
        </authorList>
    </citation>
    <scope>NUCLEOTIDE SEQUENCE [LARGE SCALE GENOMIC DNA]</scope>
</reference>
<reference key="12">
    <citation type="journal article" date="2004" name="Genome Res.">
        <title>The status, quality, and expansion of the NIH full-length cDNA project: the Mammalian Gene Collection (MGC).</title>
        <authorList>
            <consortium name="The MGC Project Team"/>
        </authorList>
    </citation>
    <scope>NUCLEOTIDE SEQUENCE [LARGE SCALE MRNA] (ISOFORM 1)</scope>
    <source>
        <tissue>Lung</tissue>
        <tissue>Muscle</tissue>
    </source>
</reference>
<reference key="13">
    <citation type="journal article" date="1993" name="J. Clin. Invest.">
        <title>The protein CD63 is in platelet dense granules, is deficient in a patient with Hermansky-Pudlak syndrome, and appears identical to granulophysin.</title>
        <authorList>
            <person name="Nishibori M."/>
            <person name="Cham B."/>
            <person name="McNicol A."/>
            <person name="Shalev A."/>
            <person name="Jain N."/>
            <person name="Gerrard J.M."/>
        </authorList>
    </citation>
    <scope>PROTEIN SEQUENCE OF 2-38 (ISOFORM 1)</scope>
    <scope>SUBCELLULAR LOCATION</scope>
    <scope>LACK OF EXPRESSION IN HERMANSKY-PUDLAK SYNDROME</scope>
    <source>
        <tissue>Platelet</tissue>
    </source>
</reference>
<reference key="14">
    <citation type="journal article" date="1985" name="Arch. Biochem. Biophys.">
        <title>Isolation and amino terminal sequencing of a novel melanoma-associated antigen.</title>
        <authorList>
            <person name="Ross A.H."/>
            <person name="Dietzschold B."/>
            <person name="Jackson D.M."/>
            <person name="Earley J.J."/>
            <person name="Ghrist B.F.D."/>
            <person name="Atkinson B."/>
            <person name="Koprowski H."/>
        </authorList>
    </citation>
    <scope>PROTEIN SEQUENCE OF 2-21 (ISOFORMS 1/2)</scope>
</reference>
<reference key="15">
    <citation type="journal article" date="1991" name="J. Biol. Chem.">
        <title>Lysosomal membrane glycoproteins. Structure, biosynthesis, and intracellular trafficking.</title>
        <authorList>
            <person name="Fukuda M."/>
        </authorList>
    </citation>
    <scope>REVIEW</scope>
    <scope>NOMENCLATURE</scope>
</reference>
<reference key="16">
    <citation type="journal article" date="2000" name="Mol. Biol. Cell">
        <title>The tetraspanin CD63/lamp3 cycles between endocytic and secretory compartments in human endothelial cells.</title>
        <authorList>
            <person name="Kobayashi T."/>
            <person name="Vischer U.M."/>
            <person name="Rosnoblet C."/>
            <person name="Lebrand C."/>
            <person name="Lindsay M."/>
            <person name="Parton R.G."/>
            <person name="Kruithof E.K.O."/>
            <person name="Gruenberg J."/>
        </authorList>
    </citation>
    <scope>SUBCELLULAR LOCATION</scope>
</reference>
<reference key="17">
    <citation type="journal article" date="2003" name="Nat. Biotechnol.">
        <title>Identification and quantification of N-linked glycoproteins using hydrazide chemistry, stable isotope labeling and mass spectrometry.</title>
        <authorList>
            <person name="Zhang H."/>
            <person name="Li X.-J."/>
            <person name="Martin D.B."/>
            <person name="Aebersold R."/>
        </authorList>
    </citation>
    <scope>GLYCOSYLATION AT ASN-130</scope>
</reference>
<reference key="18">
    <citation type="journal article" date="2004" name="Cytometry">
        <title>LAMP-1 and LAMP-2, but not LAMP-3, are reliable markers for activation-induced secretion of human mast cells.</title>
        <authorList>
            <person name="Gruetzkau A."/>
            <person name="Smorodchenko A."/>
            <person name="Lippert U."/>
            <person name="Kirchhof L."/>
            <person name="Artuc M."/>
            <person name="Henz B.M."/>
        </authorList>
    </citation>
    <scope>SUBCELLULAR LOCATION</scope>
</reference>
<reference key="19">
    <citation type="journal article" date="2006" name="EMBO J.">
        <title>Identification of CD63 as a tissue inhibitor of metalloproteinase-1 interacting cell surface protein.</title>
        <authorList>
            <person name="Jung K.K."/>
            <person name="Liu X.W."/>
            <person name="Chirco R."/>
            <person name="Fridman R."/>
            <person name="Kim H.R."/>
        </authorList>
    </citation>
    <scope>FUNCTION</scope>
    <scope>SUBCELLULAR LOCATION</scope>
    <scope>INTERACTION WITH TIMP1 AND ITGB1</scope>
</reference>
<reference key="20">
    <citation type="journal article" date="2007" name="Traffic">
        <title>Integral and associated lysosomal membrane proteins.</title>
        <authorList>
            <person name="Schroeder B."/>
            <person name="Wrocklage C."/>
            <person name="Pan C."/>
            <person name="Jaeger R."/>
            <person name="Koesters B."/>
            <person name="Schaefer H."/>
            <person name="Elsaesser H.-P."/>
            <person name="Mann M."/>
            <person name="Hasilik A."/>
        </authorList>
    </citation>
    <scope>SUBCELLULAR LOCATION [LARGE SCALE ANALYSIS]</scope>
    <source>
        <tissue>Placenta</tissue>
    </source>
</reference>
<reference key="21">
    <citation type="journal article" date="2009" name="J. Proteome Res.">
        <title>Glycoproteomics analysis of human liver tissue by combination of multiple enzyme digestion and hydrazide chemistry.</title>
        <authorList>
            <person name="Chen R."/>
            <person name="Jiang X."/>
            <person name="Sun D."/>
            <person name="Han G."/>
            <person name="Wang F."/>
            <person name="Ye M."/>
            <person name="Wang L."/>
            <person name="Zou H."/>
        </authorList>
    </citation>
    <scope>GLYCOSYLATION [LARGE SCALE ANALYSIS] AT ASN-130</scope>
    <source>
        <tissue>Liver</tissue>
    </source>
</reference>
<reference key="22">
    <citation type="journal article" date="2010" name="Thromb. Res.">
        <title>Palmitoylation supports the association of tetraspanin CD63 with CD9 and integrin alphaIIbbeta3 in activated platelets.</title>
        <authorList>
            <person name="Israels S.J."/>
            <person name="McMillan-Ward E.M."/>
        </authorList>
    </citation>
    <scope>PALMITOYLATION</scope>
    <scope>SUBCELLULAR LOCATION</scope>
    <scope>TISSUE SPECIFICITY</scope>
    <scope>INTERACTION WITH CD9</scope>
    <scope>IDENTIFICATION IN A COMPLEX WITH ITGB3</scope>
</reference>
<reference key="23">
    <citation type="journal article" date="2011" name="BMC Syst. Biol.">
        <title>Initial characterization of the human central proteome.</title>
        <authorList>
            <person name="Burkard T.R."/>
            <person name="Planyavsky M."/>
            <person name="Kaupe I."/>
            <person name="Breitwieser F.P."/>
            <person name="Buerckstuemmer T."/>
            <person name="Bennett K.L."/>
            <person name="Superti-Furga G."/>
            <person name="Colinge J."/>
        </authorList>
    </citation>
    <scope>IDENTIFICATION BY MASS SPECTROMETRY [LARGE SCALE ANALYSIS]</scope>
</reference>
<reference key="24">
    <citation type="journal article" date="2011" name="Blood">
        <title>CD63 is an essential cofactor to leukocyte recruitment by endothelial P-selectin.</title>
        <authorList>
            <person name="Doyle E.L."/>
            <person name="Ridger V."/>
            <person name="Ferraro F."/>
            <person name="Turmaine M."/>
            <person name="Saftig P."/>
            <person name="Cutler D.F."/>
        </authorList>
    </citation>
    <scope>FUNCTION IN CELL-CELL ADHESION</scope>
    <scope>SUBCELLULAR LOCATION</scope>
</reference>
<reference key="25">
    <citation type="journal article" date="2011" name="Dev. Cell">
        <title>The tetraspanin CD63 regulates ESCRT-independent and -dependent endosomal sorting during melanogenesis.</title>
        <authorList>
            <person name="van Niel G."/>
            <person name="Charrin S."/>
            <person name="Simoes S."/>
            <person name="Romao M."/>
            <person name="Rochin L."/>
            <person name="Saftig P."/>
            <person name="Marks M.S."/>
            <person name="Rubinstein E."/>
            <person name="Raposo G."/>
        </authorList>
    </citation>
    <scope>FUNCTION IN MELANOCYTE DEVELOPMENT</scope>
    <scope>SUBCELLULAR LOCATION</scope>
    <scope>INTERACTION WITH PMEL</scope>
</reference>
<reference key="26">
    <citation type="journal article" date="2012" name="Mol. Cell. Biol.">
        <title>The role of ceroid lipofuscinosis neuronal protein 5 (CLN5) in endosomal sorting.</title>
        <authorList>
            <person name="Mamo A."/>
            <person name="Jules F."/>
            <person name="Dumaresq-Doiron K."/>
            <person name="Costantino S."/>
            <person name="Lefrancois S."/>
        </authorList>
    </citation>
    <scope>SUBCELLULAR LOCATION</scope>
</reference>
<reference key="27">
    <citation type="journal article" date="2012" name="Nat. Cell Biol.">
        <title>Syndecan-syntenin-ALIX regulates the biogenesis of exosomes.</title>
        <authorList>
            <person name="Baietti M.F."/>
            <person name="Zhang Z."/>
            <person name="Mortier E."/>
            <person name="Melchior A."/>
            <person name="Degeest G."/>
            <person name="Geeraerts A."/>
            <person name="Ivarsson Y."/>
            <person name="Depoortere F."/>
            <person name="Coomans C."/>
            <person name="Vermeiren E."/>
            <person name="Zimmermann P."/>
            <person name="David G."/>
        </authorList>
    </citation>
    <scope>SUBCELLULAR LOCATION</scope>
</reference>
<reference key="28">
    <citation type="journal article" date="2013" name="J. Biol. Chem.">
        <title>Tetraspanin CD63 promotes vascular endothelial growth factor receptor 2-beta1 integrin complex formation, thereby regulating activation and downstream signaling in endothelial cells in vitro and in vivo.</title>
        <authorList>
            <person name="Tugues S."/>
            <person name="Honjo S."/>
            <person name="Konig C."/>
            <person name="Padhan N."/>
            <person name="Kroon J."/>
            <person name="Gualandi L."/>
            <person name="Li X."/>
            <person name="Barkefors I."/>
            <person name="Thijssen V.L."/>
            <person name="Griffioen A.W."/>
            <person name="Claesson-Welsh L."/>
        </authorList>
    </citation>
    <scope>FUNCTION</scope>
    <scope>SUBCELLULAR LOCATION</scope>
    <scope>INTERACTION WITH KDR</scope>
</reference>
<reference key="29">
    <citation type="journal article" date="2014" name="Biochem. J.">
        <title>TIMP-1 modulates chemotaxis of human neural stem cells through CD63 and integrin signalling.</title>
        <authorList>
            <person name="Lee S.Y."/>
            <person name="Kim J.M."/>
            <person name="Cho S.Y."/>
            <person name="Kim H.S."/>
            <person name="Shin H.S."/>
            <person name="Jeon J.Y."/>
            <person name="Kausar R."/>
            <person name="Jeong S.Y."/>
            <person name="Lee Y.S."/>
            <person name="Lee M.A."/>
        </authorList>
    </citation>
    <scope>FUNCTION</scope>
    <scope>INTERACTION WITH ITGB1</scope>
</reference>
<reference key="30">
    <citation type="journal article" date="2015" name="Proteomics">
        <title>N-terminome analysis of the human mitochondrial proteome.</title>
        <authorList>
            <person name="Vaca Jacome A.S."/>
            <person name="Rabilloud T."/>
            <person name="Schaeffer-Reiss C."/>
            <person name="Rompais M."/>
            <person name="Ayoub D."/>
            <person name="Lane L."/>
            <person name="Bairoch A."/>
            <person name="Van Dorsselaer A."/>
            <person name="Carapito C."/>
        </authorList>
    </citation>
    <scope>CLEAVAGE OF INITIATOR METHIONINE [LARGE SCALE ANALYSIS]</scope>
    <scope>IDENTIFICATION BY MASS SPECTROMETRY [LARGE SCALE ANALYSIS]</scope>
</reference>
<reference key="31">
    <citation type="journal article" date="2024" name="Biol. Open">
        <title>Arf GTPase-Activating proteins ADAP1 and ARAP1 regulate incorporation of CD63 in multivesicular bodies.</title>
        <authorList>
            <person name="Suzuki K."/>
            <person name="Okawa Y."/>
            <person name="Akter S."/>
            <person name="Ito H."/>
            <person name="Shiba Y."/>
        </authorList>
    </citation>
    <scope>SUBCELLULAR LOCATION</scope>
</reference>
<proteinExistence type="evidence at protein level"/>
<dbReference type="EMBL" id="X07982">
    <property type="protein sequence ID" value="CAA30792.1"/>
    <property type="molecule type" value="mRNA"/>
</dbReference>
<dbReference type="EMBL" id="M59907">
    <property type="protein sequence ID" value="AAA63235.1"/>
    <property type="molecule type" value="mRNA"/>
</dbReference>
<dbReference type="EMBL" id="M58485">
    <property type="status" value="NOT_ANNOTATED_CDS"/>
    <property type="molecule type" value="mRNA"/>
</dbReference>
<dbReference type="EMBL" id="S93788">
    <property type="protein sequence ID" value="AAB21617.1"/>
    <property type="molecule type" value="mRNA"/>
</dbReference>
<dbReference type="EMBL" id="X62654">
    <property type="protein sequence ID" value="CAA44519.1"/>
    <property type="molecule type" value="Genomic_DNA"/>
</dbReference>
<dbReference type="EMBL" id="AF508304">
    <property type="protein sequence ID" value="AAM34259.1"/>
    <property type="molecule type" value="mRNA"/>
</dbReference>
<dbReference type="EMBL" id="AK311893">
    <property type="protein sequence ID" value="BAG34834.1"/>
    <property type="molecule type" value="mRNA"/>
</dbReference>
<dbReference type="EMBL" id="CR542096">
    <property type="protein sequence ID" value="CAG46893.1"/>
    <property type="molecule type" value="mRNA"/>
</dbReference>
<dbReference type="EMBL" id="BT007073">
    <property type="protein sequence ID" value="AAP35736.1"/>
    <property type="molecule type" value="mRNA"/>
</dbReference>
<dbReference type="EMBL" id="BT020137">
    <property type="protein sequence ID" value="AAV38939.1"/>
    <property type="molecule type" value="mRNA"/>
</dbReference>
<dbReference type="EMBL" id="BT020138">
    <property type="protein sequence ID" value="AAV38940.1"/>
    <property type="molecule type" value="mRNA"/>
</dbReference>
<dbReference type="EMBL" id="AC009779">
    <property type="status" value="NOT_ANNOTATED_CDS"/>
    <property type="molecule type" value="Genomic_DNA"/>
</dbReference>
<dbReference type="EMBL" id="CH471054">
    <property type="protein sequence ID" value="EAW96827.1"/>
    <property type="molecule type" value="Genomic_DNA"/>
</dbReference>
<dbReference type="EMBL" id="BC002349">
    <property type="protein sequence ID" value="AAH02349.1"/>
    <property type="molecule type" value="mRNA"/>
</dbReference>
<dbReference type="EMBL" id="BC013017">
    <property type="protein sequence ID" value="AAH13017.1"/>
    <property type="molecule type" value="mRNA"/>
</dbReference>
<dbReference type="CCDS" id="CCDS58242.1">
    <molecule id="P08962-3"/>
</dbReference>
<dbReference type="CCDS" id="CCDS58243.1">
    <molecule id="P08962-2"/>
</dbReference>
<dbReference type="CCDS" id="CCDS8890.1">
    <molecule id="P08962-1"/>
</dbReference>
<dbReference type="PIR" id="I38016">
    <property type="entry name" value="I38016"/>
</dbReference>
<dbReference type="RefSeq" id="NP_001244318.1">
    <molecule id="P08962-1"/>
    <property type="nucleotide sequence ID" value="NM_001257389.2"/>
</dbReference>
<dbReference type="RefSeq" id="NP_001244319.1">
    <molecule id="P08962-1"/>
    <property type="nucleotide sequence ID" value="NM_001257390.2"/>
</dbReference>
<dbReference type="RefSeq" id="NP_001244320.1">
    <molecule id="P08962-1"/>
    <property type="nucleotide sequence ID" value="NM_001257391.2"/>
</dbReference>
<dbReference type="RefSeq" id="NP_001244321.1">
    <molecule id="P08962-2"/>
    <property type="nucleotide sequence ID" value="NM_001257392.1"/>
</dbReference>
<dbReference type="RefSeq" id="NP_001244329.1">
    <molecule id="P08962-3"/>
    <property type="nucleotide sequence ID" value="NM_001257400.2"/>
</dbReference>
<dbReference type="RefSeq" id="NP_001244330.1">
    <molecule id="P08962-3"/>
    <property type="nucleotide sequence ID" value="NM_001257401.2"/>
</dbReference>
<dbReference type="RefSeq" id="NP_001254627.1">
    <molecule id="P08962-1"/>
    <property type="nucleotide sequence ID" value="NM_001267698.2"/>
</dbReference>
<dbReference type="RefSeq" id="NP_001400210.1">
    <molecule id="P08962-1"/>
    <property type="nucleotide sequence ID" value="NM_001413281.1"/>
</dbReference>
<dbReference type="RefSeq" id="NP_001400211.1">
    <molecule id="P08962-1"/>
    <property type="nucleotide sequence ID" value="NM_001413282.1"/>
</dbReference>
<dbReference type="RefSeq" id="NP_001400212.1">
    <molecule id="P08962-1"/>
    <property type="nucleotide sequence ID" value="NM_001413283.1"/>
</dbReference>
<dbReference type="RefSeq" id="NP_001400213.1">
    <molecule id="P08962-1"/>
    <property type="nucleotide sequence ID" value="NM_001413284.1"/>
</dbReference>
<dbReference type="RefSeq" id="NP_001400214.1">
    <molecule id="P08962-1"/>
    <property type="nucleotide sequence ID" value="NM_001413285.1"/>
</dbReference>
<dbReference type="RefSeq" id="NP_001400215.1">
    <molecule id="P08962-3"/>
    <property type="nucleotide sequence ID" value="NM_001413286.1"/>
</dbReference>
<dbReference type="RefSeq" id="NP_001771.1">
    <molecule id="P08962-1"/>
    <property type="nucleotide sequence ID" value="NM_001780.6"/>
</dbReference>
<dbReference type="SMR" id="P08962"/>
<dbReference type="BioGRID" id="107405">
    <property type="interactions" value="109"/>
</dbReference>
<dbReference type="CORUM" id="P08962"/>
<dbReference type="FunCoup" id="P08962">
    <property type="interactions" value="436"/>
</dbReference>
<dbReference type="IntAct" id="P08962">
    <property type="interactions" value="92"/>
</dbReference>
<dbReference type="MINT" id="P08962"/>
<dbReference type="STRING" id="9606.ENSP00000447730"/>
<dbReference type="BindingDB" id="P08962"/>
<dbReference type="ChEMBL" id="CHEMBL3713303"/>
<dbReference type="TCDB" id="8.A.40.1.19">
    <property type="family name" value="the tetraspanin (tetraspanin) family"/>
</dbReference>
<dbReference type="GlyConnect" id="1088">
    <property type="glycosylation" value="18 N-Linked glycans (3 sites)"/>
</dbReference>
<dbReference type="GlyCosmos" id="P08962">
    <property type="glycosylation" value="3 sites, 18 glycans"/>
</dbReference>
<dbReference type="GlyGen" id="P08962">
    <property type="glycosylation" value="7 sites, 110 N-linked glycans (3 sites), 1 N-linked;o-linked glycan (1 site), 1 O-linked glycan (1 site)"/>
</dbReference>
<dbReference type="iPTMnet" id="P08962"/>
<dbReference type="PhosphoSitePlus" id="P08962"/>
<dbReference type="SwissPalm" id="P08962"/>
<dbReference type="BioMuta" id="CD63"/>
<dbReference type="DMDM" id="116026"/>
<dbReference type="CPTAC" id="CPTAC-1281"/>
<dbReference type="jPOST" id="P08962"/>
<dbReference type="MassIVE" id="P08962"/>
<dbReference type="PaxDb" id="9606-ENSP00000447730"/>
<dbReference type="PeptideAtlas" id="P08962"/>
<dbReference type="ProteomicsDB" id="29322"/>
<dbReference type="ProteomicsDB" id="52180">
    <molecule id="P08962-1"/>
</dbReference>
<dbReference type="ProteomicsDB" id="72253"/>
<dbReference type="Pumba" id="P08962"/>
<dbReference type="ABCD" id="P08962">
    <property type="antibodies" value="1 sequenced antibody"/>
</dbReference>
<dbReference type="Antibodypedia" id="2770">
    <property type="antibodies" value="2228 antibodies from 51 providers"/>
</dbReference>
<dbReference type="DNASU" id="967"/>
<dbReference type="Ensembl" id="ENST00000257857.9">
    <molecule id="P08962-1"/>
    <property type="protein sequence ID" value="ENSP00000257857.4"/>
    <property type="gene ID" value="ENSG00000135404.12"/>
</dbReference>
<dbReference type="Ensembl" id="ENST00000420846.7">
    <molecule id="P08962-1"/>
    <property type="protein sequence ID" value="ENSP00000393502.3"/>
    <property type="gene ID" value="ENSG00000135404.12"/>
</dbReference>
<dbReference type="Ensembl" id="ENST00000546939.5">
    <molecule id="P08962-3"/>
    <property type="protein sequence ID" value="ENSP00000447356.1"/>
    <property type="gene ID" value="ENSG00000135404.12"/>
</dbReference>
<dbReference type="Ensembl" id="ENST00000549117.5">
    <molecule id="P08962-1"/>
    <property type="protein sequence ID" value="ENSP00000447730.1"/>
    <property type="gene ID" value="ENSG00000135404.12"/>
</dbReference>
<dbReference type="Ensembl" id="ENST00000550776.5">
    <molecule id="P08962-3"/>
    <property type="protein sequence ID" value="ENSP00000448091.1"/>
    <property type="gene ID" value="ENSG00000135404.12"/>
</dbReference>
<dbReference type="Ensembl" id="ENST00000552692.5">
    <molecule id="P08962-1"/>
    <property type="protein sequence ID" value="ENSP00000449337.1"/>
    <property type="gene ID" value="ENSG00000135404.12"/>
</dbReference>
<dbReference type="Ensembl" id="ENST00000552754.5">
    <molecule id="P08962-2"/>
    <property type="protein sequence ID" value="ENSP00000446807.1"/>
    <property type="gene ID" value="ENSG00000135404.12"/>
</dbReference>
<dbReference type="GeneID" id="967"/>
<dbReference type="KEGG" id="hsa:967"/>
<dbReference type="MANE-Select" id="ENST00000257857.9">
    <property type="protein sequence ID" value="ENSP00000257857.4"/>
    <property type="RefSeq nucleotide sequence ID" value="NM_001780.6"/>
    <property type="RefSeq protein sequence ID" value="NP_001771.1"/>
</dbReference>
<dbReference type="UCSC" id="uc001shn.5">
    <molecule id="P08962-1"/>
    <property type="organism name" value="human"/>
</dbReference>
<dbReference type="AGR" id="HGNC:1692"/>
<dbReference type="CTD" id="967"/>
<dbReference type="DisGeNET" id="967"/>
<dbReference type="GeneCards" id="CD63"/>
<dbReference type="HGNC" id="HGNC:1692">
    <property type="gene designation" value="CD63"/>
</dbReference>
<dbReference type="HPA" id="ENSG00000135404">
    <property type="expression patterns" value="Low tissue specificity"/>
</dbReference>
<dbReference type="MalaCards" id="CD63"/>
<dbReference type="MIM" id="155740">
    <property type="type" value="gene"/>
</dbReference>
<dbReference type="neXtProt" id="NX_P08962"/>
<dbReference type="OpenTargets" id="ENSG00000135404"/>
<dbReference type="PharmGKB" id="PA26231"/>
<dbReference type="VEuPathDB" id="HostDB:ENSG00000135404"/>
<dbReference type="eggNOG" id="KOG3882">
    <property type="taxonomic scope" value="Eukaryota"/>
</dbReference>
<dbReference type="GeneTree" id="ENSGT00940000156832"/>
<dbReference type="HOGENOM" id="CLU_055524_6_1_1"/>
<dbReference type="InParanoid" id="P08962"/>
<dbReference type="OMA" id="RSWDIMQ"/>
<dbReference type="OrthoDB" id="10033535at2759"/>
<dbReference type="PAN-GO" id="P08962">
    <property type="GO annotations" value="2 GO annotations based on evolutionary models"/>
</dbReference>
<dbReference type="PhylomeDB" id="P08962"/>
<dbReference type="TreeFam" id="TF316345"/>
<dbReference type="PathwayCommons" id="P08962"/>
<dbReference type="Reactome" id="R-HSA-114608">
    <property type="pathway name" value="Platelet degranulation"/>
</dbReference>
<dbReference type="Reactome" id="R-HSA-6798695">
    <property type="pathway name" value="Neutrophil degranulation"/>
</dbReference>
<dbReference type="SignaLink" id="P08962"/>
<dbReference type="SIGNOR" id="P08962"/>
<dbReference type="BioGRID-ORCS" id="967">
    <property type="hits" value="19 hits in 1161 CRISPR screens"/>
</dbReference>
<dbReference type="ChiTaRS" id="CD63">
    <property type="organism name" value="human"/>
</dbReference>
<dbReference type="GeneWiki" id="CD63"/>
<dbReference type="GenomeRNAi" id="967"/>
<dbReference type="Pharos" id="P08962">
    <property type="development level" value="Tchem"/>
</dbReference>
<dbReference type="PRO" id="PR:P08962"/>
<dbReference type="Proteomes" id="UP000005640">
    <property type="component" value="Chromosome 12"/>
</dbReference>
<dbReference type="RNAct" id="P08962">
    <property type="molecule type" value="protein"/>
</dbReference>
<dbReference type="Bgee" id="ENSG00000135404">
    <property type="expression patterns" value="Expressed in stromal cell of endometrium and 216 other cell types or tissues"/>
</dbReference>
<dbReference type="ExpressionAtlas" id="P08962">
    <property type="expression patterns" value="baseline and differential"/>
</dbReference>
<dbReference type="GO" id="GO:0035577">
    <property type="term" value="C:azurophil granule membrane"/>
    <property type="evidence" value="ECO:0000304"/>
    <property type="project" value="Reactome"/>
</dbReference>
<dbReference type="GO" id="GO:0009986">
    <property type="term" value="C:cell surface"/>
    <property type="evidence" value="ECO:0000314"/>
    <property type="project" value="MGI"/>
</dbReference>
<dbReference type="GO" id="GO:0031904">
    <property type="term" value="C:endosome lumen"/>
    <property type="evidence" value="ECO:0000314"/>
    <property type="project" value="UniProtKB"/>
</dbReference>
<dbReference type="GO" id="GO:0010008">
    <property type="term" value="C:endosome membrane"/>
    <property type="evidence" value="ECO:0000314"/>
    <property type="project" value="UniProtKB"/>
</dbReference>
<dbReference type="GO" id="GO:0070062">
    <property type="term" value="C:extracellular exosome"/>
    <property type="evidence" value="ECO:0000314"/>
    <property type="project" value="UniProtKB"/>
</dbReference>
<dbReference type="GO" id="GO:0005615">
    <property type="term" value="C:extracellular space"/>
    <property type="evidence" value="ECO:0000314"/>
    <property type="project" value="UniProtKB"/>
</dbReference>
<dbReference type="GO" id="GO:0043231">
    <property type="term" value="C:intracellular membrane-bounded organelle"/>
    <property type="evidence" value="ECO:0000314"/>
    <property type="project" value="HPA"/>
</dbReference>
<dbReference type="GO" id="GO:0031902">
    <property type="term" value="C:late endosome membrane"/>
    <property type="evidence" value="ECO:0000314"/>
    <property type="project" value="UniProtKB"/>
</dbReference>
<dbReference type="GO" id="GO:0005765">
    <property type="term" value="C:lysosomal membrane"/>
    <property type="evidence" value="ECO:0000314"/>
    <property type="project" value="UniProtKB"/>
</dbReference>
<dbReference type="GO" id="GO:0042470">
    <property type="term" value="C:melanosome"/>
    <property type="evidence" value="ECO:0007669"/>
    <property type="project" value="UniProtKB-SubCell"/>
</dbReference>
<dbReference type="GO" id="GO:0032585">
    <property type="term" value="C:multivesicular body membrane"/>
    <property type="evidence" value="ECO:0000314"/>
    <property type="project" value="UniProtKB"/>
</dbReference>
<dbReference type="GO" id="GO:0097487">
    <property type="term" value="C:multivesicular body, internal vesicle"/>
    <property type="evidence" value="ECO:0000314"/>
    <property type="project" value="UniProtKB"/>
</dbReference>
<dbReference type="GO" id="GO:0005654">
    <property type="term" value="C:nucleoplasm"/>
    <property type="evidence" value="ECO:0000314"/>
    <property type="project" value="HPA"/>
</dbReference>
<dbReference type="GO" id="GO:0005886">
    <property type="term" value="C:plasma membrane"/>
    <property type="evidence" value="ECO:0000314"/>
    <property type="project" value="UniProtKB"/>
</dbReference>
<dbReference type="GO" id="GO:0031088">
    <property type="term" value="C:platelet dense granule membrane"/>
    <property type="evidence" value="ECO:0000304"/>
    <property type="project" value="Reactome"/>
</dbReference>
<dbReference type="GO" id="GO:0032991">
    <property type="term" value="C:protein-containing complex"/>
    <property type="evidence" value="ECO:0007669"/>
    <property type="project" value="Ensembl"/>
</dbReference>
<dbReference type="GO" id="GO:0044877">
    <property type="term" value="F:protein-containing complex binding"/>
    <property type="evidence" value="ECO:0007669"/>
    <property type="project" value="Ensembl"/>
</dbReference>
<dbReference type="GO" id="GO:0016477">
    <property type="term" value="P:cell migration"/>
    <property type="evidence" value="ECO:0000315"/>
    <property type="project" value="UniProtKB"/>
</dbReference>
<dbReference type="GO" id="GO:0007160">
    <property type="term" value="P:cell-matrix adhesion"/>
    <property type="evidence" value="ECO:0000315"/>
    <property type="project" value="UniProtKB"/>
</dbReference>
<dbReference type="GO" id="GO:0035646">
    <property type="term" value="P:endosome to melanosome transport"/>
    <property type="evidence" value="ECO:0000315"/>
    <property type="project" value="UniProtKB"/>
</dbReference>
<dbReference type="GO" id="GO:0030855">
    <property type="term" value="P:epithelial cell differentiation"/>
    <property type="evidence" value="ECO:0007669"/>
    <property type="project" value="Ensembl"/>
</dbReference>
<dbReference type="GO" id="GO:0010633">
    <property type="term" value="P:negative regulation of epithelial cell migration"/>
    <property type="evidence" value="ECO:0007669"/>
    <property type="project" value="Ensembl"/>
</dbReference>
<dbReference type="GO" id="GO:0048757">
    <property type="term" value="P:pigment granule maturation"/>
    <property type="evidence" value="ECO:0000315"/>
    <property type="project" value="UniProtKB"/>
</dbReference>
<dbReference type="GO" id="GO:0045785">
    <property type="term" value="P:positive regulation of cell adhesion"/>
    <property type="evidence" value="ECO:0007669"/>
    <property type="project" value="Ensembl"/>
</dbReference>
<dbReference type="GO" id="GO:2001046">
    <property type="term" value="P:positive regulation of integrin-mediated signaling pathway"/>
    <property type="evidence" value="ECO:0000315"/>
    <property type="project" value="UniProtKB"/>
</dbReference>
<dbReference type="GO" id="GO:0002092">
    <property type="term" value="P:positive regulation of receptor internalization"/>
    <property type="evidence" value="ECO:0000315"/>
    <property type="project" value="UniProtKB"/>
</dbReference>
<dbReference type="GO" id="GO:0015031">
    <property type="term" value="P:protein transport"/>
    <property type="evidence" value="ECO:0007669"/>
    <property type="project" value="UniProtKB-KW"/>
</dbReference>
<dbReference type="GO" id="GO:1901379">
    <property type="term" value="P:regulation of potassium ion transmembrane transport"/>
    <property type="evidence" value="ECO:0000314"/>
    <property type="project" value="MGI"/>
</dbReference>
<dbReference type="GO" id="GO:1900746">
    <property type="term" value="P:regulation of vascular endothelial growth factor signaling pathway"/>
    <property type="evidence" value="ECO:0000315"/>
    <property type="project" value="UniProtKB"/>
</dbReference>
<dbReference type="CDD" id="cd03166">
    <property type="entry name" value="CD63_LEL"/>
    <property type="match status" value="1"/>
</dbReference>
<dbReference type="FunFam" id="1.10.1450.10:FF:000019">
    <property type="entry name" value="Tetraspanin"/>
    <property type="match status" value="1"/>
</dbReference>
<dbReference type="Gene3D" id="1.10.1450.10">
    <property type="entry name" value="Tetraspanin"/>
    <property type="match status" value="1"/>
</dbReference>
<dbReference type="InterPro" id="IPR042028">
    <property type="entry name" value="CD63_LEL"/>
</dbReference>
<dbReference type="InterPro" id="IPR018499">
    <property type="entry name" value="Tetraspanin/Peripherin"/>
</dbReference>
<dbReference type="InterPro" id="IPR000301">
    <property type="entry name" value="Tetraspanin_animals"/>
</dbReference>
<dbReference type="InterPro" id="IPR018503">
    <property type="entry name" value="Tetraspanin_CS"/>
</dbReference>
<dbReference type="InterPro" id="IPR008952">
    <property type="entry name" value="Tetraspanin_EC2_sf"/>
</dbReference>
<dbReference type="PANTHER" id="PTHR19282:SF471">
    <property type="entry name" value="CD63 ANTIGEN"/>
    <property type="match status" value="1"/>
</dbReference>
<dbReference type="PANTHER" id="PTHR19282">
    <property type="entry name" value="TETRASPANIN"/>
    <property type="match status" value="1"/>
</dbReference>
<dbReference type="Pfam" id="PF00335">
    <property type="entry name" value="Tetraspanin"/>
    <property type="match status" value="1"/>
</dbReference>
<dbReference type="PIRSF" id="PIRSF002419">
    <property type="entry name" value="Tetraspanin"/>
    <property type="match status" value="1"/>
</dbReference>
<dbReference type="PRINTS" id="PR00259">
    <property type="entry name" value="TMFOUR"/>
</dbReference>
<dbReference type="SUPFAM" id="SSF48652">
    <property type="entry name" value="Tetraspanin"/>
    <property type="match status" value="1"/>
</dbReference>
<dbReference type="PROSITE" id="PS00421">
    <property type="entry name" value="TM4_1"/>
    <property type="match status" value="1"/>
</dbReference>
<comment type="function">
    <text evidence="6 11 12 15 16">Functions as a cell surface receptor for TIMP1 and plays a role in the activation of cellular signaling cascades. Plays a role in the activation of ITGB1 and integrin signaling, leading to the activation of AKT, FAK/PTK2 and MAP kinases. Promotes cell survival, reorganization of the actin cytoskeleton, cell adhesion, spreading and migration, via its role in the activation of AKT and FAK/PTK2. Plays a role in VEGFA signaling via its role in regulating the internalization of KDR/VEGFR2. Plays a role in intracellular vesicular transport processes, and is required for normal trafficking of the PMEL luminal domain that is essential for the development and maturation of melanocytes. Plays a role in the adhesion of leukocytes onto endothelial cells via its role in the regulation of SELP trafficking. May play a role in mast cell degranulation in response to Ms4a2/FceRI stimulation, but not in mast cell degranulation in response to other stimuli.</text>
</comment>
<comment type="subunit">
    <text evidence="1 6 9 12 15 16">Interacts with TIMP1 and ITGB1 and recruits TIMP1 to ITGB1 (PubMed:16917503, PubMed:24635319). Interacts with CD9. Identified in a complex with CD9 and ITGB3 (PubMed:19640571). Interacts with PMEL (PubMed:21962903). Interacts with KDR/VEGFR2; identified in a complex with ITGB1 and KDR/VEGFR2 and is required to recruit KDR to ITGB1 complexes (PubMed:23632027). Interacts with SYT7 (By similarity).</text>
</comment>
<comment type="interaction">
    <interactant intactId="EBI-762053">
        <id>P08962</id>
    </interactant>
    <interactant intactId="EBI-712536">
        <id>P01033</id>
        <label>TIMP1</label>
    </interactant>
    <organismsDiffer>false</organismsDiffer>
    <experiments>8</experiments>
</comment>
<comment type="interaction">
    <interactant intactId="EBI-762053">
        <id>P08962</id>
    </interactant>
    <interactant intactId="EBI-11742770">
        <id>Q96HE8</id>
        <label>TMEM80</label>
    </interactant>
    <organismsDiffer>false</organismsDiffer>
    <experiments>3</experiments>
</comment>
<comment type="interaction">
    <interactant intactId="EBI-762053">
        <id>P08962</id>
    </interactant>
    <interactant intactId="EBI-6179711">
        <id>PRO_0000038428</id>
        <label>env</label>
        <dbReference type="UniProtKB" id="P04578"/>
    </interactant>
    <organismsDiffer>true</organismsDiffer>
    <experiments>4</experiments>
</comment>
<comment type="subcellular location">
    <subcellularLocation>
        <location evidence="5 9 15">Cell membrane</location>
        <topology evidence="2">Multi-pass membrane protein</topology>
    </subcellularLocation>
    <subcellularLocation>
        <location evidence="7 9 10 13 15">Lysosome membrane</location>
        <topology evidence="2">Multi-pass membrane protein</topology>
    </subcellularLocation>
    <subcellularLocation>
        <location evidence="3 15">Late endosome membrane</location>
        <topology evidence="2">Multi-pass membrane protein</topology>
    </subcellularLocation>
    <subcellularLocation>
        <location evidence="12 17">Endosome</location>
        <location evidence="12 17">Multivesicular body</location>
    </subcellularLocation>
    <subcellularLocation>
        <location evidence="12">Melanosome</location>
    </subcellularLocation>
    <subcellularLocation>
        <location evidence="14">Secreted</location>
        <location evidence="14">Extracellular exosome</location>
    </subcellularLocation>
    <subcellularLocation>
        <location evidence="6 15 16">Cell surface</location>
    </subcellularLocation>
    <text evidence="3 12 18">Also found in Weibel-Palade bodies of endothelial cells (PubMed:10793155). Located in platelet dense granules (PubMed:7682577). Detected in a subset of pre-melanosomes. Detected on intralumenal vesicles (ILVs) within multivesicular bodies (PubMed:21962903).</text>
</comment>
<comment type="alternative products">
    <event type="alternative splicing"/>
    <isoform>
        <id>P08962-1</id>
        <name>1</name>
        <sequence type="displayed"/>
    </isoform>
    <isoform>
        <id>P08962-2</id>
        <name>2</name>
        <sequence type="described" ref="VSP_045300"/>
    </isoform>
    <isoform>
        <id>P08962-3</id>
        <name>3</name>
        <sequence type="described" ref="VSP_046996"/>
    </isoform>
</comment>
<comment type="tissue specificity">
    <text evidence="9">Detected in platelets (at protein level). Dysplastic nevi, radial growth phase primary melanomas, hematopoietic cells, tissue macrophages.</text>
</comment>
<comment type="PTM">
    <text evidence="9">Palmitoylated at a low, basal level in unstimulated platelets. The level of palmitoylation increases when platelets are activated by thrombin (in vitro).</text>
</comment>
<comment type="miscellaneous">
    <text>Lack of expression of CD63 in platelets has been observed in a patient with Hermansky-Pudlak syndrome (HPS). Hermansky-Pudlak syndrome (HPS) is a genetically heterogeneous, rare, autosomal recessive disorder characterized by oculocutaneous albinism, bleeding due to platelet storage pool deficiency, and lysosomal storage defects. This syndrome results from defects of diverse cytoplasmic organelles including melanosomes, platelet dense granules and lysosomes. Ceroid storage in the lungs is associated with pulmonary fibrosis, a common cause of premature death in individuals with HPS.</text>
</comment>
<comment type="miscellaneous">
    <text>This antigen is associated with early stages of melanoma tumor progression.</text>
</comment>
<comment type="similarity">
    <text evidence="23">Belongs to the tetraspanin (TM4SF) family.</text>
</comment>
<feature type="initiator methionine" description="Removed" evidence="24">
    <location>
        <position position="1"/>
    </location>
</feature>
<feature type="chain" id="PRO_0000219216" description="CD63 antigen">
    <location>
        <begin position="2"/>
        <end position="238"/>
    </location>
</feature>
<feature type="topological domain" description="Cytoplasmic" evidence="2">
    <location>
        <begin position="2"/>
        <end position="11"/>
    </location>
</feature>
<feature type="transmembrane region" description="Helical" evidence="2">
    <location>
        <begin position="12"/>
        <end position="32"/>
    </location>
</feature>
<feature type="topological domain" description="Extracellular" evidence="2">
    <location>
        <begin position="33"/>
        <end position="51"/>
    </location>
</feature>
<feature type="transmembrane region" description="Helical" evidence="2">
    <location>
        <begin position="52"/>
        <end position="72"/>
    </location>
</feature>
<feature type="topological domain" description="Cytoplasmic" evidence="2">
    <location>
        <begin position="73"/>
        <end position="81"/>
    </location>
</feature>
<feature type="transmembrane region" description="Helical" evidence="2">
    <location>
        <begin position="82"/>
        <end position="102"/>
    </location>
</feature>
<feature type="topological domain" description="Extracellular" evidence="2">
    <location>
        <begin position="103"/>
        <end position="203"/>
    </location>
</feature>
<feature type="transmembrane region" description="Helical" evidence="2">
    <location>
        <begin position="204"/>
        <end position="224"/>
    </location>
</feature>
<feature type="topological domain" description="Cytoplasmic" evidence="2">
    <location>
        <begin position="225"/>
        <end position="238"/>
    </location>
</feature>
<feature type="short sequence motif" description="Lysosomal targeting motif" evidence="1">
    <location>
        <begin position="234"/>
        <end position="238"/>
    </location>
</feature>
<feature type="glycosylation site" description="N-linked (GlcNAc...) asparagine" evidence="4 8">
    <location>
        <position position="130"/>
    </location>
</feature>
<feature type="glycosylation site" description="N-linked (GlcNAc...) asparagine" evidence="2">
    <location>
        <position position="150"/>
    </location>
</feature>
<feature type="glycosylation site" description="N-linked (GlcNAc...) asparagine" evidence="2">
    <location>
        <position position="172"/>
    </location>
</feature>
<feature type="splice variant" id="VSP_046996" description="In isoform 3." evidence="23">
    <location>
        <begin position="1"/>
        <end position="82"/>
    </location>
</feature>
<feature type="splice variant" id="VSP_045300" description="In isoform 2." evidence="22">
    <location>
        <begin position="23"/>
        <end position="45"/>
    </location>
</feature>
<feature type="sequence conflict" description="In Ref. 13; AA sequence." evidence="23" ref="13">
    <original>Q</original>
    <variation>E</variation>
    <location>
        <position position="36"/>
    </location>
</feature>
<evidence type="ECO:0000250" key="1">
    <source>
        <dbReference type="UniProtKB" id="P41731"/>
    </source>
</evidence>
<evidence type="ECO:0000255" key="2"/>
<evidence type="ECO:0000269" key="3">
    <source>
    </source>
</evidence>
<evidence type="ECO:0000269" key="4">
    <source>
    </source>
</evidence>
<evidence type="ECO:0000269" key="5">
    <source>
    </source>
</evidence>
<evidence type="ECO:0000269" key="6">
    <source>
    </source>
</evidence>
<evidence type="ECO:0000269" key="7">
    <source>
    </source>
</evidence>
<evidence type="ECO:0000269" key="8">
    <source>
    </source>
</evidence>
<evidence type="ECO:0000269" key="9">
    <source>
    </source>
</evidence>
<evidence type="ECO:0000269" key="10">
    <source>
    </source>
</evidence>
<evidence type="ECO:0000269" key="11">
    <source>
    </source>
</evidence>
<evidence type="ECO:0000269" key="12">
    <source>
    </source>
</evidence>
<evidence type="ECO:0000269" key="13">
    <source>
    </source>
</evidence>
<evidence type="ECO:0000269" key="14">
    <source>
    </source>
</evidence>
<evidence type="ECO:0000269" key="15">
    <source>
    </source>
</evidence>
<evidence type="ECO:0000269" key="16">
    <source>
    </source>
</evidence>
<evidence type="ECO:0000269" key="17">
    <source>
    </source>
</evidence>
<evidence type="ECO:0000269" key="18">
    <source>
    </source>
</evidence>
<evidence type="ECO:0000303" key="19">
    <source>
    </source>
</evidence>
<evidence type="ECO:0000303" key="20">
    <source>
    </source>
</evidence>
<evidence type="ECO:0000303" key="21">
    <source>
    </source>
</evidence>
<evidence type="ECO:0000303" key="22">
    <source ref="6"/>
</evidence>
<evidence type="ECO:0000305" key="23"/>
<evidence type="ECO:0007744" key="24">
    <source>
    </source>
</evidence>
<gene>
    <name type="primary">CD63</name>
    <name type="synonym">MLA1</name>
    <name type="synonym">TSPAN30</name>
</gene>
<sequence>MAVEGGMKCVKFLLYVLLLAFCACAVGLIAVGVGAQLVLSQTIIQGATPGSLLPVVIIAVGVFLFLVAFVGCCGACKENYCLMITFAIFLSLIMLVEVAAAIAGYVFRDKVMSEFNNNFRQQMENYPKNNHTASILDRMQADFKCCGAANYTDWEKIPSMSKNRVPDSCCINVTVGCGINFNEKAIHKEGCVEKIGGWLRKNVLVVAAAALGIAFVEVLGIVFACCLVKSIRSGYEVM</sequence>
<name>CD63_HUMAN</name>
<organism>
    <name type="scientific">Homo sapiens</name>
    <name type="common">Human</name>
    <dbReference type="NCBI Taxonomy" id="9606"/>
    <lineage>
        <taxon>Eukaryota</taxon>
        <taxon>Metazoa</taxon>
        <taxon>Chordata</taxon>
        <taxon>Craniata</taxon>
        <taxon>Vertebrata</taxon>
        <taxon>Euteleostomi</taxon>
        <taxon>Mammalia</taxon>
        <taxon>Eutheria</taxon>
        <taxon>Euarchontoglires</taxon>
        <taxon>Primates</taxon>
        <taxon>Haplorrhini</taxon>
        <taxon>Catarrhini</taxon>
        <taxon>Hominidae</taxon>
        <taxon>Homo</taxon>
    </lineage>
</organism>
<accession>P08962</accession>
<accession>F8VZE2</accession>
<accession>Q5TZP3</accession>
<accession>Q8N6Z9</accession>
<accession>Q9UCG6</accession>
<protein>
    <recommendedName>
        <fullName>CD63 antigen</fullName>
    </recommendedName>
    <alternativeName>
        <fullName>Granulophysin</fullName>
    </alternativeName>
    <alternativeName>
        <fullName evidence="19 21">Lysosomal-associated membrane protein 3</fullName>
        <shortName evidence="19 21">LAMP-3</shortName>
    </alternativeName>
    <alternativeName>
        <fullName evidence="21">Lysosome integral membrane protein 1</fullName>
        <shortName evidence="21">Limp1</shortName>
    </alternativeName>
    <alternativeName>
        <fullName evidence="20 21">Melanoma-associated antigen ME491</fullName>
    </alternativeName>
    <alternativeName>
        <fullName>OMA81H</fullName>
    </alternativeName>
    <alternativeName>
        <fullName>Ocular melanoma-associated antigen</fullName>
    </alternativeName>
    <alternativeName>
        <fullName>Tetraspanin-30</fullName>
        <shortName>Tspan-30</shortName>
    </alternativeName>
    <cdAntigenName>CD63</cdAntigenName>
</protein>